<comment type="function">
    <text evidence="2">Attaches beta-O-GlcNAc (beta-O-N-acetyl-D-glucosamine) residues to the C4 position of poly(RboP)-wall teichoic acids (WTAs). Mediates beta-lactam resistance in methicillin resistant Staphylococcus aureus (MRSA) strains.</text>
</comment>
<comment type="catalytic activity">
    <reaction evidence="2">
        <text>4-O-[(D-ribitylphospho)(n)-di{(2R)-glycerylphospho}]-N-acetyl-beta-D-mannosaminyl-(1-&gt;4)-N-acetyl-alpha-D-glucosaminyl di-trans,octa-cis-undecaprenyl diphosphate + n UDP-N-acetyl-alpha-D-glucosamine = 4-O-([2-N-acetyl-beta-D-glucosaminyl-1-D-ribitylphospho](n)-di{[2R]-1-glycerylphospho})-N-acetyl-beta-D-mannosaminyl-(1-&gt;4)-N-acetyl-alpha-D-glucosaminyl di-trans,octa-cis-undecaprenyl diphosphate + n UDP + n H(+)</text>
        <dbReference type="Rhea" id="RHEA:55672"/>
        <dbReference type="Rhea" id="RHEA-COMP:12840"/>
        <dbReference type="Rhea" id="RHEA-COMP:14257"/>
        <dbReference type="ChEBI" id="CHEBI:15378"/>
        <dbReference type="ChEBI" id="CHEBI:57705"/>
        <dbReference type="ChEBI" id="CHEBI:58223"/>
        <dbReference type="ChEBI" id="CHEBI:133896"/>
        <dbReference type="ChEBI" id="CHEBI:139146"/>
        <dbReference type="EC" id="2.4.1.355"/>
    </reaction>
</comment>
<comment type="cofactor">
    <cofactor evidence="2">
        <name>Mn(2+)</name>
        <dbReference type="ChEBI" id="CHEBI:29035"/>
    </cofactor>
    <text evidence="2">Can also use Mg(2+).</text>
</comment>
<comment type="biophysicochemical properties">
    <kinetics>
        <KM evidence="2">45 uM for UDP-GlcNAc</KM>
        <KM evidence="2">1240 uM for poly(RboP)</KM>
    </kinetics>
</comment>
<comment type="pathway">
    <text evidence="2">Cell wall biogenesis; poly(ribitol phosphate) teichoic acid biosynthesis.</text>
</comment>
<comment type="subunit">
    <text evidence="2">Homotrimer.</text>
</comment>
<comment type="domain">
    <text evidence="2">Contains a trimerization domain, composed of stacked carbohydrate binding modules, connected by a linker region to the catalytic domain. The trimerization domain appears to be dispensable for UDP-GlcNAc hydrolysis activity, but it may increase poly(RboP) binding affinity.</text>
</comment>
<comment type="miscellaneous">
    <text evidence="5">TarS is a unique target for compounds used in combination with beta-lactams to treat MRSA infections.</text>
</comment>
<comment type="similarity">
    <text evidence="4">Belongs to the glycosyltransferase 2 family.</text>
</comment>
<dbReference type="EC" id="2.4.1.355" evidence="2"/>
<dbReference type="EMBL" id="BA000017">
    <property type="protein sequence ID" value="BAB56420.1"/>
    <property type="molecule type" value="Genomic_DNA"/>
</dbReference>
<dbReference type="RefSeq" id="WP_000975351.1">
    <property type="nucleotide sequence ID" value="NC_002758.2"/>
</dbReference>
<dbReference type="PDB" id="5TZ8">
    <property type="method" value="X-ray"/>
    <property type="resolution" value="4.00 A"/>
    <property type="chains" value="A/B/C=2-573"/>
</dbReference>
<dbReference type="PDB" id="5TZE">
    <property type="method" value="X-ray"/>
    <property type="resolution" value="2.33 A"/>
    <property type="chains" value="C/E=2-350"/>
</dbReference>
<dbReference type="PDB" id="5TZI">
    <property type="method" value="X-ray"/>
    <property type="resolution" value="2.30 A"/>
    <property type="chains" value="C=2-350"/>
</dbReference>
<dbReference type="PDB" id="5TZJ">
    <property type="method" value="X-ray"/>
    <property type="resolution" value="1.90 A"/>
    <property type="chains" value="A/C=2-350"/>
</dbReference>
<dbReference type="PDB" id="5TZK">
    <property type="method" value="X-ray"/>
    <property type="resolution" value="2.22 A"/>
    <property type="chains" value="C=2-350"/>
</dbReference>
<dbReference type="PDB" id="5U02">
    <property type="method" value="X-ray"/>
    <property type="resolution" value="2.30 A"/>
    <property type="chains" value="A=218-573"/>
</dbReference>
<dbReference type="PDBsum" id="5TZ8"/>
<dbReference type="PDBsum" id="5TZE"/>
<dbReference type="PDBsum" id="5TZI"/>
<dbReference type="PDBsum" id="5TZJ"/>
<dbReference type="PDBsum" id="5TZK"/>
<dbReference type="PDBsum" id="5U02"/>
<dbReference type="SMR" id="A0A0H3JPC6"/>
<dbReference type="KEGG" id="sav:SAV0258"/>
<dbReference type="HOGENOM" id="CLU_018620_2_0_9"/>
<dbReference type="PhylomeDB" id="A0A0H3JPC6"/>
<dbReference type="BRENDA" id="2.4.1.355">
    <property type="organism ID" value="3352"/>
</dbReference>
<dbReference type="UniPathway" id="UPA00790"/>
<dbReference type="Proteomes" id="UP000002481">
    <property type="component" value="Chromosome"/>
</dbReference>
<dbReference type="GO" id="GO:0016758">
    <property type="term" value="F:hexosyltransferase activity"/>
    <property type="evidence" value="ECO:0007669"/>
    <property type="project" value="UniProtKB-ARBA"/>
</dbReference>
<dbReference type="GO" id="GO:0046872">
    <property type="term" value="F:metal ion binding"/>
    <property type="evidence" value="ECO:0007669"/>
    <property type="project" value="UniProtKB-KW"/>
</dbReference>
<dbReference type="GO" id="GO:0071555">
    <property type="term" value="P:cell wall organization"/>
    <property type="evidence" value="ECO:0007669"/>
    <property type="project" value="UniProtKB-KW"/>
</dbReference>
<dbReference type="GO" id="GO:0046677">
    <property type="term" value="P:response to antibiotic"/>
    <property type="evidence" value="ECO:0007669"/>
    <property type="project" value="UniProtKB-KW"/>
</dbReference>
<dbReference type="GO" id="GO:0019350">
    <property type="term" value="P:teichoic acid biosynthetic process"/>
    <property type="evidence" value="ECO:0007669"/>
    <property type="project" value="UniProtKB-KW"/>
</dbReference>
<dbReference type="CDD" id="cd00761">
    <property type="entry name" value="Glyco_tranf_GTA_type"/>
    <property type="match status" value="1"/>
</dbReference>
<dbReference type="Gene3D" id="3.90.550.10">
    <property type="entry name" value="Spore Coat Polysaccharide Biosynthesis Protein SpsA, Chain A"/>
    <property type="match status" value="1"/>
</dbReference>
<dbReference type="InterPro" id="IPR001173">
    <property type="entry name" value="Glyco_trans_2-like"/>
</dbReference>
<dbReference type="InterPro" id="IPR029044">
    <property type="entry name" value="Nucleotide-diphossugar_trans"/>
</dbReference>
<dbReference type="InterPro" id="IPR054028">
    <property type="entry name" value="TarS/TarP_linker"/>
</dbReference>
<dbReference type="InterPro" id="IPR041038">
    <property type="entry name" value="TarS_C1"/>
</dbReference>
<dbReference type="InterPro" id="IPR054531">
    <property type="entry name" value="TarS_C2"/>
</dbReference>
<dbReference type="PANTHER" id="PTHR22916">
    <property type="entry name" value="GLYCOSYLTRANSFERASE"/>
    <property type="match status" value="1"/>
</dbReference>
<dbReference type="PANTHER" id="PTHR22916:SF3">
    <property type="entry name" value="UDP-GLCNAC:BETAGAL BETA-1,3-N-ACETYLGLUCOSAMINYLTRANSFERASE-LIKE PROTEIN 1"/>
    <property type="match status" value="1"/>
</dbReference>
<dbReference type="Pfam" id="PF00535">
    <property type="entry name" value="Glycos_transf_2"/>
    <property type="match status" value="1"/>
</dbReference>
<dbReference type="Pfam" id="PF18674">
    <property type="entry name" value="TarS_C1"/>
    <property type="match status" value="1"/>
</dbReference>
<dbReference type="Pfam" id="PF22377">
    <property type="entry name" value="TarS_C2"/>
    <property type="match status" value="1"/>
</dbReference>
<dbReference type="Pfam" id="PF22181">
    <property type="entry name" value="TarS_linker"/>
    <property type="match status" value="1"/>
</dbReference>
<dbReference type="SUPFAM" id="SSF53448">
    <property type="entry name" value="Nucleotide-diphospho-sugar transferases"/>
    <property type="match status" value="1"/>
</dbReference>
<gene>
    <name evidence="3" type="primary">tarS</name>
    <name evidence="6" type="ordered locus">SAV0258</name>
</gene>
<feature type="chain" id="PRO_0000446298" description="Poly(ribitol-phosphate) beta-N-acetylglucosaminyltransferase TarS">
    <location>
        <begin position="1"/>
        <end position="573"/>
    </location>
</feature>
<feature type="active site" description="Proton acceptor" evidence="5">
    <location>
        <position position="179"/>
    </location>
</feature>
<feature type="binding site" evidence="5">
    <location>
        <position position="9"/>
    </location>
    <ligand>
        <name>UDP-N-acetyl-alpha-D-glucosamine</name>
        <dbReference type="ChEBI" id="CHEBI:57705"/>
    </ligand>
</feature>
<feature type="binding site" evidence="5">
    <location>
        <position position="41"/>
    </location>
    <ligand>
        <name>UDP-N-acetyl-alpha-D-glucosamine</name>
        <dbReference type="ChEBI" id="CHEBI:57705"/>
    </ligand>
</feature>
<feature type="binding site" evidence="5">
    <location>
        <position position="68"/>
    </location>
    <ligand>
        <name>UDP-N-acetyl-alpha-D-glucosamine</name>
        <dbReference type="ChEBI" id="CHEBI:57705"/>
    </ligand>
</feature>
<feature type="binding site" evidence="5">
    <location>
        <position position="76"/>
    </location>
    <ligand>
        <name>UDP-N-acetyl-alpha-D-glucosamine</name>
        <dbReference type="ChEBI" id="CHEBI:57705"/>
    </ligand>
</feature>
<feature type="binding site" evidence="5">
    <location>
        <begin position="92"/>
        <end position="94"/>
    </location>
    <ligand>
        <name>UDP-N-acetyl-alpha-D-glucosamine</name>
        <dbReference type="ChEBI" id="CHEBI:57705"/>
    </ligand>
</feature>
<feature type="binding site" evidence="2">
    <location>
        <position position="94"/>
    </location>
    <ligand>
        <name>Mn(2+)</name>
        <dbReference type="ChEBI" id="CHEBI:29035"/>
    </ligand>
</feature>
<feature type="binding site" evidence="5">
    <location>
        <position position="127"/>
    </location>
    <ligand>
        <name>UDP-N-acetyl-alpha-D-glucosamine</name>
        <dbReference type="ChEBI" id="CHEBI:57705"/>
    </ligand>
</feature>
<feature type="binding site" evidence="5">
    <location>
        <position position="178"/>
    </location>
    <ligand>
        <name>UDP-N-acetyl-alpha-D-glucosamine</name>
        <dbReference type="ChEBI" id="CHEBI:57705"/>
    </ligand>
</feature>
<feature type="binding site" evidence="5">
    <location>
        <position position="207"/>
    </location>
    <ligand>
        <name>UDP-N-acetyl-alpha-D-glucosamine</name>
        <dbReference type="ChEBI" id="CHEBI:57705"/>
    </ligand>
</feature>
<feature type="binding site" evidence="5">
    <location>
        <begin position="211"/>
        <end position="213"/>
    </location>
    <ligand>
        <name>UDP-N-acetyl-alpha-D-glucosamine</name>
        <dbReference type="ChEBI" id="CHEBI:57705"/>
    </ligand>
</feature>
<feature type="mutagenesis site" description="Loss of activity." evidence="2">
    <original>R</original>
    <variation>A</variation>
    <location>
        <position position="76"/>
    </location>
</feature>
<feature type="mutagenesis site" description="Loss of activity." evidence="2">
    <original>D</original>
    <variation>A</variation>
    <location>
        <position position="92"/>
    </location>
</feature>
<feature type="mutagenesis site" description="Loss of activity." evidence="2">
    <original>D</original>
    <variation>A</variation>
    <location>
        <position position="94"/>
    </location>
</feature>
<feature type="mutagenesis site" description="Loss of activity." evidence="2">
    <original>D</original>
    <variation>A</variation>
    <location>
        <position position="95"/>
    </location>
</feature>
<feature type="mutagenesis site" description="Loss of activity." evidence="2">
    <original>E</original>
    <variation>A</variation>
    <location>
        <position position="178"/>
    </location>
</feature>
<feature type="mutagenesis site" description="Severe decrease in activity." evidence="2">
    <original>D</original>
    <variation>N</variation>
    <location>
        <position position="179"/>
    </location>
</feature>
<feature type="mutagenesis site" description="No change in activity." evidence="2">
    <original>D</original>
    <variation>A</variation>
    <location>
        <position position="198"/>
    </location>
</feature>
<feature type="mutagenesis site" description="Severe decrease in activity." evidence="2">
    <original>R</original>
    <variation>A</variation>
    <location>
        <position position="207"/>
    </location>
</feature>
<feature type="mutagenesis site" description="Loss of activity." evidence="2">
    <original>H</original>
    <variation>A</variation>
    <location>
        <position position="211"/>
    </location>
</feature>
<feature type="mutagenesis site" description="Severe decrease in activity." evidence="2">
    <original>S</original>
    <variation>A</variation>
    <location>
        <position position="213"/>
    </location>
</feature>
<feature type="strand" evidence="13">
    <location>
        <begin position="4"/>
        <end position="12"/>
    </location>
</feature>
<feature type="turn" evidence="13">
    <location>
        <begin position="14"/>
        <end position="16"/>
    </location>
</feature>
<feature type="helix" evidence="13">
    <location>
        <begin position="17"/>
        <end position="25"/>
    </location>
</feature>
<feature type="helix" evidence="13">
    <location>
        <begin position="31"/>
        <end position="33"/>
    </location>
</feature>
<feature type="strand" evidence="13">
    <location>
        <begin position="34"/>
        <end position="40"/>
    </location>
</feature>
<feature type="strand" evidence="13">
    <location>
        <begin position="44"/>
        <end position="46"/>
    </location>
</feature>
<feature type="helix" evidence="13">
    <location>
        <begin position="47"/>
        <end position="52"/>
    </location>
</feature>
<feature type="turn" evidence="13">
    <location>
        <begin position="53"/>
        <end position="57"/>
    </location>
</feature>
<feature type="strand" evidence="13">
    <location>
        <begin position="60"/>
        <end position="64"/>
    </location>
</feature>
<feature type="strand" evidence="13">
    <location>
        <begin position="70"/>
        <end position="72"/>
    </location>
</feature>
<feature type="helix" evidence="13">
    <location>
        <begin position="73"/>
        <end position="82"/>
    </location>
</feature>
<feature type="strand" evidence="13">
    <location>
        <begin position="85"/>
        <end position="90"/>
    </location>
</feature>
<feature type="helix" evidence="13">
    <location>
        <begin position="101"/>
        <end position="112"/>
    </location>
</feature>
<feature type="strand" evidence="13">
    <location>
        <begin position="115"/>
        <end position="119"/>
    </location>
</feature>
<feature type="strand" evidence="13">
    <location>
        <begin position="121"/>
        <end position="123"/>
    </location>
</feature>
<feature type="strand" evidence="13">
    <location>
        <begin position="138"/>
        <end position="141"/>
    </location>
</feature>
<feature type="turn" evidence="13">
    <location>
        <begin position="143"/>
        <end position="145"/>
    </location>
</feature>
<feature type="helix" evidence="13">
    <location>
        <begin position="148"/>
        <end position="150"/>
    </location>
</feature>
<feature type="strand" evidence="13">
    <location>
        <begin position="156"/>
        <end position="159"/>
    </location>
</feature>
<feature type="helix" evidence="13">
    <location>
        <begin position="160"/>
        <end position="165"/>
    </location>
</feature>
<feature type="strand" evidence="13">
    <location>
        <begin position="175"/>
        <end position="177"/>
    </location>
</feature>
<feature type="helix" evidence="13">
    <location>
        <begin position="178"/>
        <end position="189"/>
    </location>
</feature>
<feature type="strand" evidence="13">
    <location>
        <begin position="193"/>
        <end position="196"/>
    </location>
</feature>
<feature type="strand" evidence="13">
    <location>
        <begin position="202"/>
        <end position="204"/>
    </location>
</feature>
<feature type="helix" evidence="13">
    <location>
        <begin position="212"/>
        <end position="214"/>
    </location>
</feature>
<feature type="helix" evidence="13">
    <location>
        <begin position="219"/>
        <end position="234"/>
    </location>
</feature>
<feature type="strand" evidence="13">
    <location>
        <begin position="236"/>
        <end position="238"/>
    </location>
</feature>
<feature type="helix" evidence="13">
    <location>
        <begin position="240"/>
        <end position="257"/>
    </location>
</feature>
<feature type="turn" evidence="13">
    <location>
        <begin position="259"/>
        <end position="262"/>
    </location>
</feature>
<feature type="helix" evidence="13">
    <location>
        <begin position="263"/>
        <end position="266"/>
    </location>
</feature>
<feature type="helix" evidence="13">
    <location>
        <begin position="269"/>
        <end position="271"/>
    </location>
</feature>
<feature type="helix" evidence="13">
    <location>
        <begin position="272"/>
        <end position="283"/>
    </location>
</feature>
<feature type="helix" evidence="13">
    <location>
        <begin position="288"/>
        <end position="293"/>
    </location>
</feature>
<feature type="helix" evidence="13">
    <location>
        <begin position="296"/>
        <end position="298"/>
    </location>
</feature>
<feature type="helix" evidence="13">
    <location>
        <begin position="299"/>
        <end position="306"/>
    </location>
</feature>
<feature type="helix" evidence="13">
    <location>
        <begin position="310"/>
        <end position="322"/>
    </location>
</feature>
<feature type="strand" evidence="13">
    <location>
        <begin position="326"/>
        <end position="331"/>
    </location>
</feature>
<feature type="strand" evidence="13">
    <location>
        <begin position="334"/>
        <end position="338"/>
    </location>
</feature>
<feature type="strand" evidence="13">
    <location>
        <begin position="345"/>
        <end position="349"/>
    </location>
</feature>
<feature type="strand" evidence="14">
    <location>
        <begin position="355"/>
        <end position="363"/>
    </location>
</feature>
<feature type="strand" evidence="14">
    <location>
        <begin position="365"/>
        <end position="376"/>
    </location>
</feature>
<feature type="strand" evidence="14">
    <location>
        <begin position="383"/>
        <end position="392"/>
    </location>
</feature>
<feature type="strand" evidence="14">
    <location>
        <begin position="398"/>
        <end position="402"/>
    </location>
</feature>
<feature type="strand" evidence="14">
    <location>
        <begin position="405"/>
        <end position="407"/>
    </location>
</feature>
<feature type="strand" evidence="14">
    <location>
        <begin position="410"/>
        <end position="416"/>
    </location>
</feature>
<feature type="helix" evidence="14">
    <location>
        <begin position="417"/>
        <end position="420"/>
    </location>
</feature>
<feature type="turn" evidence="14">
    <location>
        <begin position="421"/>
        <end position="423"/>
    </location>
</feature>
<feature type="helix" evidence="14">
    <location>
        <begin position="424"/>
        <end position="426"/>
    </location>
</feature>
<feature type="strand" evidence="14">
    <location>
        <begin position="428"/>
        <end position="438"/>
    </location>
</feature>
<feature type="strand" evidence="14">
    <location>
        <begin position="441"/>
        <end position="446"/>
    </location>
</feature>
<feature type="strand" evidence="14">
    <location>
        <begin position="448"/>
        <end position="452"/>
    </location>
</feature>
<feature type="strand" evidence="14">
    <location>
        <begin position="461"/>
        <end position="466"/>
    </location>
</feature>
<feature type="strand" evidence="14">
    <location>
        <begin position="469"/>
        <end position="477"/>
    </location>
</feature>
<feature type="turn" evidence="14">
    <location>
        <begin position="479"/>
        <end position="481"/>
    </location>
</feature>
<feature type="strand" evidence="14">
    <location>
        <begin position="484"/>
        <end position="491"/>
    </location>
</feature>
<feature type="helix" evidence="14">
    <location>
        <begin position="493"/>
        <end position="496"/>
    </location>
</feature>
<feature type="strand" evidence="14">
    <location>
        <begin position="497"/>
        <end position="502"/>
    </location>
</feature>
<feature type="turn" evidence="14">
    <location>
        <begin position="503"/>
        <end position="505"/>
    </location>
</feature>
<feature type="strand" evidence="14">
    <location>
        <begin position="506"/>
        <end position="514"/>
    </location>
</feature>
<feature type="strand" evidence="14">
    <location>
        <begin position="521"/>
        <end position="527"/>
    </location>
</feature>
<feature type="strand" evidence="14">
    <location>
        <begin position="530"/>
        <end position="540"/>
    </location>
</feature>
<feature type="strand" evidence="14">
    <location>
        <begin position="543"/>
        <end position="550"/>
    </location>
</feature>
<feature type="helix" evidence="14">
    <location>
        <begin position="554"/>
        <end position="557"/>
    </location>
</feature>
<feature type="strand" evidence="14">
    <location>
        <begin position="562"/>
        <end position="564"/>
    </location>
</feature>
<feature type="strand" evidence="14">
    <location>
        <begin position="569"/>
        <end position="571"/>
    </location>
</feature>
<proteinExistence type="evidence at protein level"/>
<protein>
    <recommendedName>
        <fullName evidence="4">Poly(ribitol-phosphate) beta-N-acetylglucosaminyltransferase TarS</fullName>
        <ecNumber evidence="2">2.4.1.355</ecNumber>
    </recommendedName>
    <alternativeName>
        <fullName evidence="1">Beta-O-GlcNAc transferase</fullName>
    </alternativeName>
    <alternativeName>
        <fullName evidence="1">Beta-O-GlcNAc-WTA transferase</fullName>
    </alternativeName>
    <alternativeName>
        <fullName evidence="1">WTA glycosyltransferase</fullName>
    </alternativeName>
    <alternativeName>
        <fullName evidence="3">Wall teichoic acid beta-glycosyltransferase</fullName>
    </alternativeName>
</protein>
<sequence length="573" mass="66257">MMKFSVIVPTYNSEKYITELLNSLAKQDFPKTEFEVVVVDDCSTDQTLQIVEKYRNKLNLKVSQLETNSGGPGKPRNVALKQAEGEFVLFVDSDDYINKETLKDAAAFIDEHHSDVLLIKMKGVNGRGVPQSMFKETAPEVTLLNSRIIYTLSPTKIYRTALLKDNDIYFPEELKSAEDQLFTMKAYLNANRISVLSDKAYYYATKREGEHMSSAYVSPEDFYEVMRLIAVEILNADLEEAHKDQILAEFLNRHFSFSRTNGFSLKVKLEEQPQWINALGDFIQAVPERVDALVMSKLRPLLHYARAKDIDNYRTVEESYRQGQYYRFDIVDGKLNIQFNEGEPYFEGIDIAKPKVKMTAFKFDNHKIVTELTLNEFMIGEGHYDVRLKLHSRNKKHTMYVPLSVNANKQYRFNIMLEDIKAYLPKEKIWDVFLEVQIGTEVFEVRVGNQRNKYAYTAETSALIHLNNDFYRLTPYFTKDFNNISLYFTAITLTDSISMKLKGKNKIILTGLDRGYVFEEGMASVVLKDDMIMGMLSQTSENEVEILLSKDIKKRDFKNIVKLNTAHMTYSLK</sequence>
<accession>A0A0H3JPC6</accession>
<keyword id="KW-0002">3D-structure</keyword>
<keyword id="KW-0046">Antibiotic resistance</keyword>
<keyword id="KW-0961">Cell wall biogenesis/degradation</keyword>
<keyword id="KW-0328">Glycosyltransferase</keyword>
<keyword id="KW-0464">Manganese</keyword>
<keyword id="KW-0479">Metal-binding</keyword>
<keyword id="KW-0777">Teichoic acid biosynthesis</keyword>
<keyword id="KW-0808">Transferase</keyword>
<keyword id="KW-0843">Virulence</keyword>
<reference key="1">
    <citation type="journal article" date="2001" name="Lancet">
        <title>Whole genome sequencing of meticillin-resistant Staphylococcus aureus.</title>
        <authorList>
            <person name="Kuroda M."/>
            <person name="Ohta T."/>
            <person name="Uchiyama I."/>
            <person name="Baba T."/>
            <person name="Yuzawa H."/>
            <person name="Kobayashi I."/>
            <person name="Cui L."/>
            <person name="Oguchi A."/>
            <person name="Aoki K."/>
            <person name="Nagai Y."/>
            <person name="Lian J.-Q."/>
            <person name="Ito T."/>
            <person name="Kanamori M."/>
            <person name="Matsumaru H."/>
            <person name="Maruyama A."/>
            <person name="Murakami H."/>
            <person name="Hosoyama A."/>
            <person name="Mizutani-Ui Y."/>
            <person name="Takahashi N.K."/>
            <person name="Sawano T."/>
            <person name="Inoue R."/>
            <person name="Kaito C."/>
            <person name="Sekimizu K."/>
            <person name="Hirakawa H."/>
            <person name="Kuhara S."/>
            <person name="Goto S."/>
            <person name="Yabuzaki J."/>
            <person name="Kanehisa M."/>
            <person name="Yamashita A."/>
            <person name="Oshima K."/>
            <person name="Furuya K."/>
            <person name="Yoshino C."/>
            <person name="Shiba T."/>
            <person name="Hattori M."/>
            <person name="Ogasawara N."/>
            <person name="Hayashi H."/>
            <person name="Hiramatsu K."/>
        </authorList>
    </citation>
    <scope>NUCLEOTIDE SEQUENCE [LARGE SCALE GENOMIC DNA]</scope>
    <source>
        <strain>Mu50 / ATCC 700699</strain>
    </source>
</reference>
<reference evidence="7 8 9 10 11 12" key="2">
    <citation type="journal article" date="2016" name="PLoS Pathog.">
        <title>Structure and mechanism of Staphylococcus aureus TarS, the wall teichoic acid beta-glycosyltransferase involved in methicillin resistance.</title>
        <authorList>
            <person name="Sobhanifar S."/>
            <person name="Worrall L.J."/>
            <person name="King D.T."/>
            <person name="Wasney G.A."/>
            <person name="Baumann L."/>
            <person name="Gale R.T."/>
            <person name="Nosella M."/>
            <person name="Brown E.D."/>
            <person name="Withers S.G."/>
            <person name="Strynadka N.C."/>
        </authorList>
    </citation>
    <scope>X-RAY CRYSTALLOGRAPHY (1.90 ANGSTROMS) OF 2-573 OF APOENZYME AND IN COMPLEXES WITH SUBSTRATE AND MANGANESE</scope>
    <scope>FUNCTION</scope>
    <scope>CATALYTIC ACTIVITY</scope>
    <scope>COFACTOR</scope>
    <scope>BIOPHYSICOCHEMICAL PROPERTIES</scope>
    <scope>PATHWAY</scope>
    <scope>SUBUNIT</scope>
    <scope>DOMAIN</scope>
    <scope>ACTIVE SITE</scope>
    <scope>DRUG TARGET</scope>
    <scope>MUTAGENESIS OF ARG-76; ASP-92; ASP-94; ASP-95; GLU-178; ASP-179; ASP-198; ARG-207; HIS-211 AND SER-213</scope>
</reference>
<name>TARS_STAAM</name>
<evidence type="ECO:0000250" key="1">
    <source>
        <dbReference type="UniProtKB" id="A0A0H3JVA1"/>
    </source>
</evidence>
<evidence type="ECO:0000269" key="2">
    <source>
    </source>
</evidence>
<evidence type="ECO:0000303" key="3">
    <source>
    </source>
</evidence>
<evidence type="ECO:0000305" key="4"/>
<evidence type="ECO:0000305" key="5">
    <source>
    </source>
</evidence>
<evidence type="ECO:0000312" key="6">
    <source>
        <dbReference type="EMBL" id="BAB56420.1"/>
    </source>
</evidence>
<evidence type="ECO:0007744" key="7">
    <source>
        <dbReference type="PDB" id="5TZ8"/>
    </source>
</evidence>
<evidence type="ECO:0007744" key="8">
    <source>
        <dbReference type="PDB" id="5TZE"/>
    </source>
</evidence>
<evidence type="ECO:0007744" key="9">
    <source>
        <dbReference type="PDB" id="5TZI"/>
    </source>
</evidence>
<evidence type="ECO:0007744" key="10">
    <source>
        <dbReference type="PDB" id="5TZJ"/>
    </source>
</evidence>
<evidence type="ECO:0007744" key="11">
    <source>
        <dbReference type="PDB" id="5TZK"/>
    </source>
</evidence>
<evidence type="ECO:0007744" key="12">
    <source>
        <dbReference type="PDB" id="5U02"/>
    </source>
</evidence>
<evidence type="ECO:0007829" key="13">
    <source>
        <dbReference type="PDB" id="5TZJ"/>
    </source>
</evidence>
<evidence type="ECO:0007829" key="14">
    <source>
        <dbReference type="PDB" id="5U02"/>
    </source>
</evidence>
<organism>
    <name type="scientific">Staphylococcus aureus (strain Mu50 / ATCC 700699)</name>
    <dbReference type="NCBI Taxonomy" id="158878"/>
    <lineage>
        <taxon>Bacteria</taxon>
        <taxon>Bacillati</taxon>
        <taxon>Bacillota</taxon>
        <taxon>Bacilli</taxon>
        <taxon>Bacillales</taxon>
        <taxon>Staphylococcaceae</taxon>
        <taxon>Staphylococcus</taxon>
    </lineage>
</organism>